<name>YUBM_ECOLI</name>
<protein>
    <recommendedName>
        <fullName>Uncharacterized protein YubM</fullName>
    </recommendedName>
</protein>
<reference key="1">
    <citation type="journal article" date="1999" name="Plasmid">
        <title>Nucleotide sequence of the F plasmid leading region.</title>
        <authorList>
            <person name="Manwaring N.P."/>
            <person name="Skurray R.A."/>
            <person name="Firth N."/>
        </authorList>
    </citation>
    <scope>NUCLEOTIDE SEQUENCE [GENOMIC DNA]</scope>
</reference>
<reference key="2">
    <citation type="submission" date="2000-04" db="EMBL/GenBank/DDBJ databases">
        <title>Complete nucleotide sequence of the F plasmid: its implications for organization and diversification of plasmid genomes.</title>
        <authorList>
            <person name="Shimizu H."/>
            <person name="Saitoh Y."/>
            <person name="Suda Y."/>
            <person name="Uehara K."/>
            <person name="Sampei G."/>
            <person name="Mizobuchi K."/>
        </authorList>
    </citation>
    <scope>NUCLEOTIDE SEQUENCE [LARGE SCALE GENOMIC DNA]</scope>
    <source>
        <strain>K12 / CR63</strain>
    </source>
</reference>
<organism>
    <name type="scientific">Escherichia coli (strain K12)</name>
    <dbReference type="NCBI Taxonomy" id="83333"/>
    <lineage>
        <taxon>Bacteria</taxon>
        <taxon>Pseudomonadati</taxon>
        <taxon>Pseudomonadota</taxon>
        <taxon>Gammaproteobacteria</taxon>
        <taxon>Enterobacterales</taxon>
        <taxon>Enterobacteriaceae</taxon>
        <taxon>Escherichia</taxon>
    </lineage>
</organism>
<accession>Q9S4W2</accession>
<accession>Q7AJP9</accession>
<gene>
    <name type="primary">yubM</name>
    <name type="synonym">yfjB</name>
    <name type="ordered locus">ECOK12F062</name>
</gene>
<geneLocation type="plasmid">
    <name>F</name>
</geneLocation>
<sequence length="652" mass="71760">MSVTESKAKTERKSSRKPAKTQETVLSALLAQTEEVSVPLASLIKSPLNVRTVPYSAESVSELADSIKGVGLLQNLVVHALPGDRYGVAAGGRRLAALNMLAERDIIQVDWPVRVKVIPQELATAASMTENGHRRDMHPAEQIAGFRAMAQEGKTPAQIGDLLGYSPRHVQRMLKLADLAPVILDALAEDRITTEHCQALALENDTARQVQVFEAACQSGWGGKPDVRVIRNLITESEVAVKDNTKFRFVGADAFSPDELRTDLFSDDEGGYVDCVALDAALLEKLQAVAEHLREAEGWEWCAGRMEPVGECREDSRAYRNLPEPEAVLTEAEEERLNELMMRYDALENQCEESDLLAAEMKLIDCMAKVRAWTPEMRAGSGVVVSWRYGNVCVQRGVQLRSEDDVTDDADRTEQVQEKASVEEISLPLLTKMSSERTLAVQAALMQQPDKSLALLTWTLCLNVFGSGAYSKPAQISLECKHYSLTSDAPSGKEGAAFMALMAEKARLVVLLPEGWSRDMTTFLSLSQEVLLSLLSFCTACSIHGVQTRECGHTSRSPLDPLETAIGFHMRDWWQPTKANFFGHLKKPQIIAALNEAGLSGAARDAEKMKKGDAAEHAEFHMKDNRWVPGWMCAPRPQTDATERTDNLADAA</sequence>
<evidence type="ECO:0000256" key="1">
    <source>
        <dbReference type="SAM" id="MobiDB-lite"/>
    </source>
</evidence>
<evidence type="ECO:0000305" key="2"/>
<keyword id="KW-0614">Plasmid</keyword>
<comment type="similarity">
    <text evidence="2">Belongs to the ParB family.</text>
</comment>
<feature type="chain" id="PRO_0000262306" description="Uncharacterized protein YubM">
    <location>
        <begin position="1"/>
        <end position="652"/>
    </location>
</feature>
<feature type="region of interest" description="Disordered" evidence="1">
    <location>
        <begin position="1"/>
        <end position="21"/>
    </location>
</feature>
<feature type="compositionally biased region" description="Basic and acidic residues" evidence="1">
    <location>
        <begin position="1"/>
        <end position="13"/>
    </location>
</feature>
<dbReference type="EMBL" id="AF106329">
    <property type="protein sequence ID" value="AAD47189.1"/>
    <property type="molecule type" value="Genomic_DNA"/>
</dbReference>
<dbReference type="EMBL" id="AP001918">
    <property type="protein sequence ID" value="BAA97932.1"/>
    <property type="molecule type" value="Genomic_DNA"/>
</dbReference>
<dbReference type="RefSeq" id="NP_061441.1">
    <property type="nucleotide sequence ID" value="NC_002483.1"/>
</dbReference>
<dbReference type="RefSeq" id="WP_000117173.1">
    <property type="nucleotide sequence ID" value="NZ_JACEFS010000057.1"/>
</dbReference>
<dbReference type="SMR" id="Q9S4W2"/>
<dbReference type="IntAct" id="Q9S4W2">
    <property type="interactions" value="1"/>
</dbReference>
<dbReference type="KEGG" id="ecoc:C3026_24410"/>
<dbReference type="PhylomeDB" id="Q9S4W2"/>
<dbReference type="GO" id="GO:0003677">
    <property type="term" value="F:DNA binding"/>
    <property type="evidence" value="ECO:0007669"/>
    <property type="project" value="InterPro"/>
</dbReference>
<dbReference type="CDD" id="cd16406">
    <property type="entry name" value="ParB_N_like"/>
    <property type="match status" value="1"/>
</dbReference>
<dbReference type="FunFam" id="1.10.10.2830:FF:000001">
    <property type="entry name" value="Chromosome partitioning protein ParB"/>
    <property type="match status" value="1"/>
</dbReference>
<dbReference type="Gene3D" id="1.10.10.2830">
    <property type="match status" value="1"/>
</dbReference>
<dbReference type="Gene3D" id="3.90.1530.30">
    <property type="match status" value="1"/>
</dbReference>
<dbReference type="InterPro" id="IPR050336">
    <property type="entry name" value="Chromosome_partition/occlusion"/>
</dbReference>
<dbReference type="InterPro" id="IPR004437">
    <property type="entry name" value="ParB/RepB/Spo0J"/>
</dbReference>
<dbReference type="InterPro" id="IPR003115">
    <property type="entry name" value="ParB/Sulfiredoxin_dom"/>
</dbReference>
<dbReference type="InterPro" id="IPR036086">
    <property type="entry name" value="ParB/Sulfiredoxin_sf"/>
</dbReference>
<dbReference type="NCBIfam" id="TIGR00180">
    <property type="entry name" value="parB_part"/>
    <property type="match status" value="1"/>
</dbReference>
<dbReference type="PANTHER" id="PTHR33375:SF7">
    <property type="entry name" value="CHROMOSOME 2-PARTITIONING PROTEIN PARB-RELATED"/>
    <property type="match status" value="1"/>
</dbReference>
<dbReference type="PANTHER" id="PTHR33375">
    <property type="entry name" value="CHROMOSOME-PARTITIONING PROTEIN PARB-RELATED"/>
    <property type="match status" value="1"/>
</dbReference>
<dbReference type="Pfam" id="PF02195">
    <property type="entry name" value="ParBc"/>
    <property type="match status" value="1"/>
</dbReference>
<dbReference type="SMART" id="SM00470">
    <property type="entry name" value="ParB"/>
    <property type="match status" value="1"/>
</dbReference>
<dbReference type="SUPFAM" id="SSF109709">
    <property type="entry name" value="KorB DNA-binding domain-like"/>
    <property type="match status" value="1"/>
</dbReference>
<dbReference type="SUPFAM" id="SSF110849">
    <property type="entry name" value="ParB/Sulfiredoxin"/>
    <property type="match status" value="1"/>
</dbReference>
<proteinExistence type="inferred from homology"/>